<organism>
    <name type="scientific">Escherichia coli O9:H4 (strain HS)</name>
    <dbReference type="NCBI Taxonomy" id="331112"/>
    <lineage>
        <taxon>Bacteria</taxon>
        <taxon>Pseudomonadati</taxon>
        <taxon>Pseudomonadota</taxon>
        <taxon>Gammaproteobacteria</taxon>
        <taxon>Enterobacterales</taxon>
        <taxon>Enterobacteriaceae</taxon>
        <taxon>Escherichia</taxon>
    </lineage>
</organism>
<keyword id="KW-0997">Cell inner membrane</keyword>
<keyword id="KW-1003">Cell membrane</keyword>
<keyword id="KW-0406">Ion transport</keyword>
<keyword id="KW-0472">Membrane</keyword>
<keyword id="KW-0812">Transmembrane</keyword>
<keyword id="KW-1133">Transmembrane helix</keyword>
<keyword id="KW-0813">Transport</keyword>
<keyword id="KW-0862">Zinc</keyword>
<proteinExistence type="inferred from homology"/>
<accession>A7ZZT5</accession>
<sequence>MEAIKGSDVNVPDAVFAWMLDGRGGVKPLENTDVIDEAHPCWLHLNYVHHDSAQWLATTPLLPNNVRDALAGESTRPRVSRLGEGTLITLRCINGSTDERPDQLVAMRVYMDGRLIVSTRQRKVLALDDVVSDLEEGTGPTDCGGWLVDVCDALTDHSSEFIEQLHDKIIDLEDNLLDQQIPPRGFLALLRKQLIVMRRYMAPQRDVYARLASERLPWMSDDQRRRMQDIADRLGRGLDEIDACIARTGVMADEIAQVMQENLARRTYTMSLMAMVFLPSTFLTGLFGVNLGGIPGGGWQFGFSIFCILLVVLIGGVALWLHRSKWL</sequence>
<feature type="chain" id="PRO_1000069069" description="Zinc transport protein ZntB">
    <location>
        <begin position="1"/>
        <end position="327"/>
    </location>
</feature>
<feature type="topological domain" description="Cytoplasmic" evidence="1">
    <location>
        <begin position="1"/>
        <end position="273"/>
    </location>
</feature>
<feature type="transmembrane region" description="Helical" evidence="1">
    <location>
        <begin position="274"/>
        <end position="294"/>
    </location>
</feature>
<feature type="topological domain" description="Periplasmic" evidence="1">
    <location>
        <begin position="295"/>
        <end position="300"/>
    </location>
</feature>
<feature type="transmembrane region" description="Helical" evidence="1">
    <location>
        <begin position="301"/>
        <end position="321"/>
    </location>
</feature>
<feature type="topological domain" description="Cytoplasmic" evidence="1">
    <location>
        <begin position="322"/>
        <end position="327"/>
    </location>
</feature>
<dbReference type="EMBL" id="CP000802">
    <property type="protein sequence ID" value="ABV05789.1"/>
    <property type="molecule type" value="Genomic_DNA"/>
</dbReference>
<dbReference type="RefSeq" id="WP_000387388.1">
    <property type="nucleotide sequence ID" value="NC_009800.1"/>
</dbReference>
<dbReference type="SMR" id="A7ZZT5"/>
<dbReference type="GeneID" id="93775479"/>
<dbReference type="KEGG" id="ecx:EcHS_A1459"/>
<dbReference type="HOGENOM" id="CLU_007127_2_0_6"/>
<dbReference type="GO" id="GO:0005886">
    <property type="term" value="C:plasma membrane"/>
    <property type="evidence" value="ECO:0007669"/>
    <property type="project" value="UniProtKB-SubCell"/>
</dbReference>
<dbReference type="GO" id="GO:0050897">
    <property type="term" value="F:cobalt ion binding"/>
    <property type="evidence" value="ECO:0007669"/>
    <property type="project" value="TreeGrafter"/>
</dbReference>
<dbReference type="GO" id="GO:0015087">
    <property type="term" value="F:cobalt ion transmembrane transporter activity"/>
    <property type="evidence" value="ECO:0007669"/>
    <property type="project" value="TreeGrafter"/>
</dbReference>
<dbReference type="GO" id="GO:0000287">
    <property type="term" value="F:magnesium ion binding"/>
    <property type="evidence" value="ECO:0007669"/>
    <property type="project" value="TreeGrafter"/>
</dbReference>
<dbReference type="GO" id="GO:0015095">
    <property type="term" value="F:magnesium ion transmembrane transporter activity"/>
    <property type="evidence" value="ECO:0007669"/>
    <property type="project" value="TreeGrafter"/>
</dbReference>
<dbReference type="GO" id="GO:0005385">
    <property type="term" value="F:zinc ion transmembrane transporter activity"/>
    <property type="evidence" value="ECO:0007669"/>
    <property type="project" value="UniProtKB-UniRule"/>
</dbReference>
<dbReference type="CDD" id="cd12833">
    <property type="entry name" value="ZntB-like_1"/>
    <property type="match status" value="1"/>
</dbReference>
<dbReference type="FunFam" id="1.20.58.340:FF:000002">
    <property type="entry name" value="Zinc transport protein ZntB"/>
    <property type="match status" value="1"/>
</dbReference>
<dbReference type="FunFam" id="1.20.58.340:FF:000003">
    <property type="entry name" value="Zinc transport protein ZntB"/>
    <property type="match status" value="1"/>
</dbReference>
<dbReference type="FunFam" id="3.30.460.20:FF:000001">
    <property type="entry name" value="Zinc transport protein ZntB"/>
    <property type="match status" value="1"/>
</dbReference>
<dbReference type="Gene3D" id="3.30.460.20">
    <property type="entry name" value="CorA soluble domain-like"/>
    <property type="match status" value="1"/>
</dbReference>
<dbReference type="Gene3D" id="1.20.58.340">
    <property type="entry name" value="Magnesium transport protein CorA, transmembrane region"/>
    <property type="match status" value="2"/>
</dbReference>
<dbReference type="HAMAP" id="MF_01565">
    <property type="entry name" value="ZntB"/>
    <property type="match status" value="1"/>
</dbReference>
<dbReference type="InterPro" id="IPR045861">
    <property type="entry name" value="CorA_cytoplasmic_dom"/>
</dbReference>
<dbReference type="InterPro" id="IPR045863">
    <property type="entry name" value="CorA_TM1_TM2"/>
</dbReference>
<dbReference type="InterPro" id="IPR002523">
    <property type="entry name" value="MgTranspt_CorA/ZnTranspt_ZntB"/>
</dbReference>
<dbReference type="InterPro" id="IPR023714">
    <property type="entry name" value="Zn_transp_ZntB"/>
</dbReference>
<dbReference type="NCBIfam" id="NF007092">
    <property type="entry name" value="PRK09546.1"/>
    <property type="match status" value="1"/>
</dbReference>
<dbReference type="PANTHER" id="PTHR46494">
    <property type="entry name" value="CORA FAMILY METAL ION TRANSPORTER (EUROFUNG)"/>
    <property type="match status" value="1"/>
</dbReference>
<dbReference type="PANTHER" id="PTHR46494:SF3">
    <property type="entry name" value="ZINC TRANSPORT PROTEIN ZNTB"/>
    <property type="match status" value="1"/>
</dbReference>
<dbReference type="Pfam" id="PF01544">
    <property type="entry name" value="CorA"/>
    <property type="match status" value="1"/>
</dbReference>
<dbReference type="SUPFAM" id="SSF143865">
    <property type="entry name" value="CorA soluble domain-like"/>
    <property type="match status" value="1"/>
</dbReference>
<dbReference type="SUPFAM" id="SSF144083">
    <property type="entry name" value="Magnesium transport protein CorA, transmembrane region"/>
    <property type="match status" value="1"/>
</dbReference>
<gene>
    <name evidence="1" type="primary">zntB</name>
    <name type="ordered locus">EcHS_A1459</name>
</gene>
<evidence type="ECO:0000255" key="1">
    <source>
        <dbReference type="HAMAP-Rule" id="MF_01565"/>
    </source>
</evidence>
<protein>
    <recommendedName>
        <fullName evidence="1">Zinc transport protein ZntB</fullName>
    </recommendedName>
</protein>
<name>ZNTB_ECOHS</name>
<reference key="1">
    <citation type="journal article" date="2008" name="J. Bacteriol.">
        <title>The pangenome structure of Escherichia coli: comparative genomic analysis of E. coli commensal and pathogenic isolates.</title>
        <authorList>
            <person name="Rasko D.A."/>
            <person name="Rosovitz M.J."/>
            <person name="Myers G.S.A."/>
            <person name="Mongodin E.F."/>
            <person name="Fricke W.F."/>
            <person name="Gajer P."/>
            <person name="Crabtree J."/>
            <person name="Sebaihia M."/>
            <person name="Thomson N.R."/>
            <person name="Chaudhuri R."/>
            <person name="Henderson I.R."/>
            <person name="Sperandio V."/>
            <person name="Ravel J."/>
        </authorList>
    </citation>
    <scope>NUCLEOTIDE SEQUENCE [LARGE SCALE GENOMIC DNA]</scope>
    <source>
        <strain>HS</strain>
    </source>
</reference>
<comment type="function">
    <text evidence="1">Zinc transporter. Acts as a Zn(2+):proton symporter, which likely mediates zinc ion uptake.</text>
</comment>
<comment type="catalytic activity">
    <reaction evidence="1">
        <text>Zn(2+)(out) + H(+)(out) = Zn(2+)(in) + H(+)(in)</text>
        <dbReference type="Rhea" id="RHEA:71195"/>
        <dbReference type="ChEBI" id="CHEBI:15378"/>
        <dbReference type="ChEBI" id="CHEBI:29105"/>
    </reaction>
    <physiologicalReaction direction="left-to-right" evidence="1">
        <dbReference type="Rhea" id="RHEA:71196"/>
    </physiologicalReaction>
</comment>
<comment type="subcellular location">
    <subcellularLocation>
        <location evidence="1">Cell inner membrane</location>
        <topology evidence="1">Multi-pass membrane protein</topology>
    </subcellularLocation>
</comment>
<comment type="similarity">
    <text evidence="1">Belongs to the CorA metal ion transporter (MIT) (TC 1.A.35) family.</text>
</comment>